<dbReference type="EC" id="6.1.1.10" evidence="1"/>
<dbReference type="EMBL" id="AE000520">
    <property type="protein sequence ID" value="AAC65761.1"/>
    <property type="molecule type" value="Genomic_DNA"/>
</dbReference>
<dbReference type="PIR" id="E71281">
    <property type="entry name" value="E71281"/>
</dbReference>
<dbReference type="RefSeq" id="WP_010882243.1">
    <property type="nucleotide sequence ID" value="NC_021490.2"/>
</dbReference>
<dbReference type="SMR" id="O83776"/>
<dbReference type="IntAct" id="O83776">
    <property type="interactions" value="13"/>
</dbReference>
<dbReference type="STRING" id="243276.TP_0798"/>
<dbReference type="EnsemblBacteria" id="AAC65761">
    <property type="protein sequence ID" value="AAC65761"/>
    <property type="gene ID" value="TP_0798"/>
</dbReference>
<dbReference type="GeneID" id="93876561"/>
<dbReference type="KEGG" id="tpa:TP_0798"/>
<dbReference type="KEGG" id="tpw:TPANIC_0798"/>
<dbReference type="eggNOG" id="COG0073">
    <property type="taxonomic scope" value="Bacteria"/>
</dbReference>
<dbReference type="eggNOG" id="COG0143">
    <property type="taxonomic scope" value="Bacteria"/>
</dbReference>
<dbReference type="HOGENOM" id="CLU_009710_1_1_12"/>
<dbReference type="OrthoDB" id="9810191at2"/>
<dbReference type="Proteomes" id="UP000000811">
    <property type="component" value="Chromosome"/>
</dbReference>
<dbReference type="GO" id="GO:0017101">
    <property type="term" value="C:aminoacyl-tRNA synthetase multienzyme complex"/>
    <property type="evidence" value="ECO:0007669"/>
    <property type="project" value="TreeGrafter"/>
</dbReference>
<dbReference type="GO" id="GO:0005829">
    <property type="term" value="C:cytosol"/>
    <property type="evidence" value="ECO:0007669"/>
    <property type="project" value="TreeGrafter"/>
</dbReference>
<dbReference type="GO" id="GO:0005524">
    <property type="term" value="F:ATP binding"/>
    <property type="evidence" value="ECO:0007669"/>
    <property type="project" value="UniProtKB-UniRule"/>
</dbReference>
<dbReference type="GO" id="GO:0046872">
    <property type="term" value="F:metal ion binding"/>
    <property type="evidence" value="ECO:0007669"/>
    <property type="project" value="UniProtKB-KW"/>
</dbReference>
<dbReference type="GO" id="GO:0004825">
    <property type="term" value="F:methionine-tRNA ligase activity"/>
    <property type="evidence" value="ECO:0007669"/>
    <property type="project" value="UniProtKB-UniRule"/>
</dbReference>
<dbReference type="GO" id="GO:0000049">
    <property type="term" value="F:tRNA binding"/>
    <property type="evidence" value="ECO:0007669"/>
    <property type="project" value="UniProtKB-KW"/>
</dbReference>
<dbReference type="GO" id="GO:0006431">
    <property type="term" value="P:methionyl-tRNA aminoacylation"/>
    <property type="evidence" value="ECO:0007669"/>
    <property type="project" value="UniProtKB-UniRule"/>
</dbReference>
<dbReference type="CDD" id="cd07957">
    <property type="entry name" value="Anticodon_Ia_Met"/>
    <property type="match status" value="1"/>
</dbReference>
<dbReference type="CDD" id="cd00814">
    <property type="entry name" value="MetRS_core"/>
    <property type="match status" value="1"/>
</dbReference>
<dbReference type="CDD" id="cd02153">
    <property type="entry name" value="tRNA_bindingDomain"/>
    <property type="match status" value="1"/>
</dbReference>
<dbReference type="FunFam" id="2.20.28.20:FF:000001">
    <property type="entry name" value="Methionine--tRNA ligase"/>
    <property type="match status" value="1"/>
</dbReference>
<dbReference type="Gene3D" id="3.40.50.620">
    <property type="entry name" value="HUPs"/>
    <property type="match status" value="1"/>
</dbReference>
<dbReference type="Gene3D" id="1.10.730.10">
    <property type="entry name" value="Isoleucyl-tRNA Synthetase, Domain 1"/>
    <property type="match status" value="1"/>
</dbReference>
<dbReference type="Gene3D" id="2.20.28.20">
    <property type="entry name" value="Methionyl-tRNA synthetase, Zn-domain"/>
    <property type="match status" value="1"/>
</dbReference>
<dbReference type="Gene3D" id="2.40.50.140">
    <property type="entry name" value="Nucleic acid-binding proteins"/>
    <property type="match status" value="1"/>
</dbReference>
<dbReference type="HAMAP" id="MF_00098">
    <property type="entry name" value="Met_tRNA_synth_type1"/>
    <property type="match status" value="1"/>
</dbReference>
<dbReference type="InterPro" id="IPR001412">
    <property type="entry name" value="aa-tRNA-synth_I_CS"/>
</dbReference>
<dbReference type="InterPro" id="IPR041872">
    <property type="entry name" value="Anticodon_Met"/>
</dbReference>
<dbReference type="InterPro" id="IPR023458">
    <property type="entry name" value="Met-tRNA_ligase_1"/>
</dbReference>
<dbReference type="InterPro" id="IPR014758">
    <property type="entry name" value="Met-tRNA_synth"/>
</dbReference>
<dbReference type="InterPro" id="IPR015413">
    <property type="entry name" value="Methionyl/Leucyl_tRNA_Synth"/>
</dbReference>
<dbReference type="InterPro" id="IPR033911">
    <property type="entry name" value="MetRS_core"/>
</dbReference>
<dbReference type="InterPro" id="IPR029038">
    <property type="entry name" value="MetRS_Zn"/>
</dbReference>
<dbReference type="InterPro" id="IPR012340">
    <property type="entry name" value="NA-bd_OB-fold"/>
</dbReference>
<dbReference type="InterPro" id="IPR014729">
    <property type="entry name" value="Rossmann-like_a/b/a_fold"/>
</dbReference>
<dbReference type="InterPro" id="IPR002547">
    <property type="entry name" value="tRNA-bd_dom"/>
</dbReference>
<dbReference type="InterPro" id="IPR009080">
    <property type="entry name" value="tRNAsynth_Ia_anticodon-bd"/>
</dbReference>
<dbReference type="NCBIfam" id="TIGR00398">
    <property type="entry name" value="metG"/>
    <property type="match status" value="1"/>
</dbReference>
<dbReference type="NCBIfam" id="NF001100">
    <property type="entry name" value="PRK00133.1"/>
    <property type="match status" value="1"/>
</dbReference>
<dbReference type="PANTHER" id="PTHR45765">
    <property type="entry name" value="METHIONINE--TRNA LIGASE"/>
    <property type="match status" value="1"/>
</dbReference>
<dbReference type="PANTHER" id="PTHR45765:SF1">
    <property type="entry name" value="METHIONINE--TRNA LIGASE, CYTOPLASMIC"/>
    <property type="match status" value="1"/>
</dbReference>
<dbReference type="Pfam" id="PF19303">
    <property type="entry name" value="Anticodon_3"/>
    <property type="match status" value="1"/>
</dbReference>
<dbReference type="Pfam" id="PF09334">
    <property type="entry name" value="tRNA-synt_1g"/>
    <property type="match status" value="1"/>
</dbReference>
<dbReference type="Pfam" id="PF01588">
    <property type="entry name" value="tRNA_bind"/>
    <property type="match status" value="1"/>
</dbReference>
<dbReference type="PRINTS" id="PR01041">
    <property type="entry name" value="TRNASYNTHMET"/>
</dbReference>
<dbReference type="SUPFAM" id="SSF47323">
    <property type="entry name" value="Anticodon-binding domain of a subclass of class I aminoacyl-tRNA synthetases"/>
    <property type="match status" value="1"/>
</dbReference>
<dbReference type="SUPFAM" id="SSF57770">
    <property type="entry name" value="Methionyl-tRNA synthetase (MetRS), Zn-domain"/>
    <property type="match status" value="1"/>
</dbReference>
<dbReference type="SUPFAM" id="SSF50249">
    <property type="entry name" value="Nucleic acid-binding proteins"/>
    <property type="match status" value="1"/>
</dbReference>
<dbReference type="SUPFAM" id="SSF52374">
    <property type="entry name" value="Nucleotidylyl transferase"/>
    <property type="match status" value="1"/>
</dbReference>
<dbReference type="PROSITE" id="PS00178">
    <property type="entry name" value="AA_TRNA_LIGASE_I"/>
    <property type="match status" value="1"/>
</dbReference>
<dbReference type="PROSITE" id="PS50886">
    <property type="entry name" value="TRBD"/>
    <property type="match status" value="1"/>
</dbReference>
<feature type="chain" id="PRO_0000139168" description="Methionine--tRNA ligase">
    <location>
        <begin position="1"/>
        <end position="811"/>
    </location>
</feature>
<feature type="domain" description="tRNA-binding" evidence="1">
    <location>
        <begin position="648"/>
        <end position="753"/>
    </location>
</feature>
<feature type="region of interest" description="Disordered" evidence="2">
    <location>
        <begin position="606"/>
        <end position="640"/>
    </location>
</feature>
<feature type="short sequence motif" description="'HIGH' region">
    <location>
        <begin position="11"/>
        <end position="21"/>
    </location>
</feature>
<feature type="short sequence motif" description="'KMSKS' region">
    <location>
        <begin position="344"/>
        <end position="348"/>
    </location>
</feature>
<feature type="compositionally biased region" description="Basic and acidic residues" evidence="2">
    <location>
        <begin position="620"/>
        <end position="635"/>
    </location>
</feature>
<feature type="binding site" evidence="1">
    <location>
        <position position="142"/>
    </location>
    <ligand>
        <name>Zn(2+)</name>
        <dbReference type="ChEBI" id="CHEBI:29105"/>
    </ligand>
</feature>
<feature type="binding site" evidence="1">
    <location>
        <position position="145"/>
    </location>
    <ligand>
        <name>Zn(2+)</name>
        <dbReference type="ChEBI" id="CHEBI:29105"/>
    </ligand>
</feature>
<feature type="binding site" evidence="1">
    <location>
        <position position="155"/>
    </location>
    <ligand>
        <name>Zn(2+)</name>
        <dbReference type="ChEBI" id="CHEBI:29105"/>
    </ligand>
</feature>
<feature type="binding site" evidence="1">
    <location>
        <position position="158"/>
    </location>
    <ligand>
        <name>Zn(2+)</name>
        <dbReference type="ChEBI" id="CHEBI:29105"/>
    </ligand>
</feature>
<feature type="binding site" evidence="1">
    <location>
        <position position="347"/>
    </location>
    <ligand>
        <name>ATP</name>
        <dbReference type="ChEBI" id="CHEBI:30616"/>
    </ligand>
</feature>
<comment type="function">
    <text evidence="1">Is required not only for elongation of protein synthesis but also for the initiation of all mRNA translation through initiator tRNA(fMet) aminoacylation.</text>
</comment>
<comment type="catalytic activity">
    <reaction evidence="1">
        <text>tRNA(Met) + L-methionine + ATP = L-methionyl-tRNA(Met) + AMP + diphosphate</text>
        <dbReference type="Rhea" id="RHEA:13481"/>
        <dbReference type="Rhea" id="RHEA-COMP:9667"/>
        <dbReference type="Rhea" id="RHEA-COMP:9698"/>
        <dbReference type="ChEBI" id="CHEBI:30616"/>
        <dbReference type="ChEBI" id="CHEBI:33019"/>
        <dbReference type="ChEBI" id="CHEBI:57844"/>
        <dbReference type="ChEBI" id="CHEBI:78442"/>
        <dbReference type="ChEBI" id="CHEBI:78530"/>
        <dbReference type="ChEBI" id="CHEBI:456215"/>
        <dbReference type="EC" id="6.1.1.10"/>
    </reaction>
</comment>
<comment type="cofactor">
    <cofactor evidence="1">
        <name>Zn(2+)</name>
        <dbReference type="ChEBI" id="CHEBI:29105"/>
    </cofactor>
    <text evidence="1">Binds 1 zinc ion per subunit.</text>
</comment>
<comment type="subunit">
    <text evidence="1">Homodimer.</text>
</comment>
<comment type="subcellular location">
    <subcellularLocation>
        <location evidence="1">Cytoplasm</location>
    </subcellularLocation>
</comment>
<comment type="similarity">
    <text evidence="1">Belongs to the class-I aminoacyl-tRNA synthetase family. MetG type 1 subfamily.</text>
</comment>
<reference key="1">
    <citation type="journal article" date="1998" name="Science">
        <title>Complete genome sequence of Treponema pallidum, the syphilis spirochete.</title>
        <authorList>
            <person name="Fraser C.M."/>
            <person name="Norris S.J."/>
            <person name="Weinstock G.M."/>
            <person name="White O."/>
            <person name="Sutton G.G."/>
            <person name="Dodson R.J."/>
            <person name="Gwinn M.L."/>
            <person name="Hickey E.K."/>
            <person name="Clayton R.A."/>
            <person name="Ketchum K.A."/>
            <person name="Sodergren E."/>
            <person name="Hardham J.M."/>
            <person name="McLeod M.P."/>
            <person name="Salzberg S.L."/>
            <person name="Peterson J.D."/>
            <person name="Khalak H.G."/>
            <person name="Richardson D.L."/>
            <person name="Howell J.K."/>
            <person name="Chidambaram M."/>
            <person name="Utterback T.R."/>
            <person name="McDonald L.A."/>
            <person name="Artiach P."/>
            <person name="Bowman C."/>
            <person name="Cotton M.D."/>
            <person name="Fujii C."/>
            <person name="Garland S.A."/>
            <person name="Hatch B."/>
            <person name="Horst K."/>
            <person name="Roberts K.M."/>
            <person name="Sandusky M."/>
            <person name="Weidman J.F."/>
            <person name="Smith H.O."/>
            <person name="Venter J.C."/>
        </authorList>
    </citation>
    <scope>NUCLEOTIDE SEQUENCE [LARGE SCALE GENOMIC DNA]</scope>
    <source>
        <strain>Nichols</strain>
    </source>
</reference>
<proteinExistence type="inferred from homology"/>
<gene>
    <name evidence="1" type="primary">metG</name>
    <name type="synonym">metS</name>
    <name type="ordered locus">TP_0798</name>
</gene>
<accession>O83776</accession>
<organism>
    <name type="scientific">Treponema pallidum (strain Nichols)</name>
    <dbReference type="NCBI Taxonomy" id="243276"/>
    <lineage>
        <taxon>Bacteria</taxon>
        <taxon>Pseudomonadati</taxon>
        <taxon>Spirochaetota</taxon>
        <taxon>Spirochaetia</taxon>
        <taxon>Spirochaetales</taxon>
        <taxon>Treponemataceae</taxon>
        <taxon>Treponema</taxon>
    </lineage>
</organism>
<sequence>MTRKLITAALPYVNNVPHLGNLIQGLSADVFARFCRMRGYHTCFVCGTDEYGTASETRAAEQGLSPAQLCAHYHALHRDIYQWFDLSFDYFGRTTSDAHTELTQALFRHLDARGFISEHESAQAYCLHCARFLADRYLRGTCPHCRNAEARADQCEHCGVLLEPETLLNARCVSCGTAPEFRPTRHLYLNLPALEKAYRSWFCTTNHLWTKNAVRMTEGWLRTGLQERAITRDLRWGVPVPKAGFEQKVFYVWFDAPVGYISITKCGTEAASSQEGGGTDDGVKEKWQSWWLDQQDVELVQFVGKDNIPFHTLFFPCMLIGSGQRWTMLTRLSATEYLNYEGGKFSKSLGVGVFGSDAKESGIPSDLWRFYLLYHRPEKSDAHFTWHEFQERVNSELIGNLCNLVNRTLTFVARTYGGVVPAQDGARSTRAQVMEETLALREAVRNTAKRMTDLMEQVQLREAFREVFALSARANKALQDGAPWKTRAQDRERADALMRELCYVIRDVLILAHPFLPWYTQQAARFLGVQLSSCAPEGGGAVCAAKKDADTAQPDTVQPTLRWSDVGERKGLTQVHPPVILFRPLETETIAAYRARYAGTARDGAGVSVPRTAQMPTGMNKKETDAQQKKEEREMPPPSDTARLSAFFSERVVLKVARVLQVERHPNADMLFVETLDDGSGVERVIVSGLVPYMAADALRGAHVLIVDNLQPRSLRGVRSCGMLLAAEYVDAQGTKAIELVQAPWALPGERATLASAPPVITPHGSAVIDADAFFSVPIRVVNYAVEVAGEPLMVGGRPLVMQRVKEGTVG</sequence>
<keyword id="KW-0030">Aminoacyl-tRNA synthetase</keyword>
<keyword id="KW-0067">ATP-binding</keyword>
<keyword id="KW-0963">Cytoplasm</keyword>
<keyword id="KW-0436">Ligase</keyword>
<keyword id="KW-0479">Metal-binding</keyword>
<keyword id="KW-0547">Nucleotide-binding</keyword>
<keyword id="KW-0648">Protein biosynthesis</keyword>
<keyword id="KW-1185">Reference proteome</keyword>
<keyword id="KW-0694">RNA-binding</keyword>
<keyword id="KW-0820">tRNA-binding</keyword>
<keyword id="KW-0862">Zinc</keyword>
<name>SYM_TREPA</name>
<protein>
    <recommendedName>
        <fullName evidence="1">Methionine--tRNA ligase</fullName>
        <ecNumber evidence="1">6.1.1.10</ecNumber>
    </recommendedName>
    <alternativeName>
        <fullName evidence="1">Methionyl-tRNA synthetase</fullName>
        <shortName evidence="1">MetRS</shortName>
    </alternativeName>
</protein>
<evidence type="ECO:0000255" key="1">
    <source>
        <dbReference type="HAMAP-Rule" id="MF_00098"/>
    </source>
</evidence>
<evidence type="ECO:0000256" key="2">
    <source>
        <dbReference type="SAM" id="MobiDB-lite"/>
    </source>
</evidence>